<reference key="1">
    <citation type="journal article" date="2012" name="Ann. N. Y. Acad. Sci.">
        <title>Adaptive radiation of venomous marine snail lineages and the accelerated evolution of venom peptide genes.</title>
        <authorList>
            <person name="Olivera B.M."/>
            <person name="Watkins M."/>
            <person name="Bandyopadhyay P."/>
            <person name="Imperial J.S."/>
            <person name="de la Cotera E.P."/>
            <person name="Aguilar M.B."/>
            <person name="Vera E.L."/>
            <person name="Concepcion G.P."/>
            <person name="Lluisma A."/>
        </authorList>
    </citation>
    <scope>NUCLEOTIDE SEQUENCE</scope>
</reference>
<keyword id="KW-1015">Disulfide bond</keyword>
<keyword id="KW-0872">Ion channel impairing toxin</keyword>
<keyword id="KW-0528">Neurotoxin</keyword>
<keyword id="KW-0646">Protease inhibitor</keyword>
<keyword id="KW-0964">Secreted</keyword>
<keyword id="KW-0722">Serine protease inhibitor</keyword>
<keyword id="KW-0732">Signal</keyword>
<keyword id="KW-0800">Toxin</keyword>
<feature type="signal peptide" evidence="2">
    <location>
        <begin position="1"/>
        <end position="20"/>
    </location>
</feature>
<feature type="chain" id="PRO_0000420715" description="Turripeptide Pal9.2">
    <location>
        <begin position="21"/>
        <end position="70"/>
    </location>
</feature>
<feature type="domain" description="Kazal-like" evidence="3">
    <location>
        <begin position="21"/>
        <end position="70"/>
    </location>
</feature>
<feature type="site" description="Reactive bond" evidence="3">
    <location>
        <begin position="32"/>
        <end position="33"/>
    </location>
</feature>
<feature type="disulfide bond" evidence="3">
    <location>
        <begin position="26"/>
        <end position="56"/>
    </location>
</feature>
<feature type="disulfide bond" evidence="3">
    <location>
        <begin position="30"/>
        <end position="49"/>
    </location>
</feature>
<feature type="disulfide bond" evidence="3">
    <location>
        <begin position="38"/>
        <end position="70"/>
    </location>
</feature>
<proteinExistence type="evidence at transcript level"/>
<accession>P0DKT1</accession>
<name>TU92_POLAB</name>
<protein>
    <recommendedName>
        <fullName>Turripeptide Pal9.2</fullName>
    </recommendedName>
</protein>
<organism>
    <name type="scientific">Polystira albida</name>
    <name type="common">White giant-turris</name>
    <name type="synonym">Pleurotoma albida</name>
    <dbReference type="NCBI Taxonomy" id="394106"/>
    <lineage>
        <taxon>Eukaryota</taxon>
        <taxon>Metazoa</taxon>
        <taxon>Spiralia</taxon>
        <taxon>Lophotrochozoa</taxon>
        <taxon>Mollusca</taxon>
        <taxon>Gastropoda</taxon>
        <taxon>Caenogastropoda</taxon>
        <taxon>Neogastropoda</taxon>
        <taxon>Conoidea</taxon>
        <taxon>Turridae</taxon>
        <taxon>Polystira</taxon>
    </lineage>
</organism>
<dbReference type="SMR" id="P0DKT1"/>
<dbReference type="GO" id="GO:0005576">
    <property type="term" value="C:extracellular region"/>
    <property type="evidence" value="ECO:0007669"/>
    <property type="project" value="UniProtKB-SubCell"/>
</dbReference>
<dbReference type="GO" id="GO:0099106">
    <property type="term" value="F:ion channel regulator activity"/>
    <property type="evidence" value="ECO:0007669"/>
    <property type="project" value="UniProtKB-KW"/>
</dbReference>
<dbReference type="GO" id="GO:0004867">
    <property type="term" value="F:serine-type endopeptidase inhibitor activity"/>
    <property type="evidence" value="ECO:0007669"/>
    <property type="project" value="UniProtKB-KW"/>
</dbReference>
<dbReference type="GO" id="GO:0090729">
    <property type="term" value="F:toxin activity"/>
    <property type="evidence" value="ECO:0007669"/>
    <property type="project" value="UniProtKB-KW"/>
</dbReference>
<dbReference type="GO" id="GO:0030154">
    <property type="term" value="P:cell differentiation"/>
    <property type="evidence" value="ECO:0007669"/>
    <property type="project" value="TreeGrafter"/>
</dbReference>
<dbReference type="CDD" id="cd00104">
    <property type="entry name" value="KAZAL_FS"/>
    <property type="match status" value="1"/>
</dbReference>
<dbReference type="Gene3D" id="3.30.60.30">
    <property type="match status" value="1"/>
</dbReference>
<dbReference type="InterPro" id="IPR002350">
    <property type="entry name" value="Kazal_dom"/>
</dbReference>
<dbReference type="InterPro" id="IPR036058">
    <property type="entry name" value="Kazal_dom_sf"/>
</dbReference>
<dbReference type="InterPro" id="IPR001239">
    <property type="entry name" value="Prot_inh_Kazal-m"/>
</dbReference>
<dbReference type="InterPro" id="IPR050653">
    <property type="entry name" value="Prot_Inhib_GrowthFact_Antg"/>
</dbReference>
<dbReference type="PANTHER" id="PTHR10913:SF45">
    <property type="entry name" value="FOLLISTATIN, ISOFORM A-RELATED"/>
    <property type="match status" value="1"/>
</dbReference>
<dbReference type="PANTHER" id="PTHR10913">
    <property type="entry name" value="FOLLISTATIN-RELATED"/>
    <property type="match status" value="1"/>
</dbReference>
<dbReference type="Pfam" id="PF07648">
    <property type="entry name" value="Kazal_2"/>
    <property type="match status" value="1"/>
</dbReference>
<dbReference type="PRINTS" id="PR00290">
    <property type="entry name" value="KAZALINHBTR"/>
</dbReference>
<dbReference type="SMART" id="SM00280">
    <property type="entry name" value="KAZAL"/>
    <property type="match status" value="1"/>
</dbReference>
<dbReference type="SUPFAM" id="SSF100895">
    <property type="entry name" value="Kazal-type serine protease inhibitors"/>
    <property type="match status" value="1"/>
</dbReference>
<dbReference type="PROSITE" id="PS51465">
    <property type="entry name" value="KAZAL_2"/>
    <property type="match status" value="1"/>
</dbReference>
<comment type="function">
    <text evidence="1">Acts as a neurotoxin by inhibiting an ion channel (By similarity). May also act as a serine protease inhibitor, since it possess the kazal serine protease inhibitor signature.</text>
</comment>
<comment type="subcellular location">
    <subcellularLocation>
        <location evidence="1">Secreted</location>
    </subcellularLocation>
</comment>
<comment type="tissue specificity">
    <text>Expressed by the venom duct.</text>
</comment>
<comment type="domain">
    <text>The cysteine framework is IX (C-C-C-C-C-C).</text>
</comment>
<comment type="similarity">
    <text evidence="4">Belongs to the conopeptide P-like superfamily.</text>
</comment>
<evidence type="ECO:0000250" key="1"/>
<evidence type="ECO:0000255" key="2"/>
<evidence type="ECO:0000255" key="3">
    <source>
        <dbReference type="PROSITE-ProRule" id="PRU00798"/>
    </source>
</evidence>
<evidence type="ECO:0000305" key="4"/>
<sequence length="70" mass="7602">MKVYCLLVVLLVGLVSQTQGQLDKKCNMACTLDYRPVCGSDGKTYPNRCALTSTACESQQSITVLHDGEC</sequence>